<protein>
    <recommendedName>
        <fullName evidence="1">Fe/S biogenesis protein NfuA</fullName>
    </recommendedName>
</protein>
<dbReference type="EMBL" id="CP001111">
    <property type="protein sequence ID" value="ACF52373.1"/>
    <property type="molecule type" value="Genomic_DNA"/>
</dbReference>
<dbReference type="RefSeq" id="WP_006377738.1">
    <property type="nucleotide sequence ID" value="NC_011071.1"/>
</dbReference>
<dbReference type="SMR" id="B4SPV3"/>
<dbReference type="STRING" id="391008.Smal_2673"/>
<dbReference type="KEGG" id="smt:Smal_2673"/>
<dbReference type="eggNOG" id="COG0316">
    <property type="taxonomic scope" value="Bacteria"/>
</dbReference>
<dbReference type="eggNOG" id="COG0694">
    <property type="taxonomic scope" value="Bacteria"/>
</dbReference>
<dbReference type="HOGENOM" id="CLU_094569_0_0_6"/>
<dbReference type="OrthoDB" id="9785450at2"/>
<dbReference type="Proteomes" id="UP000001867">
    <property type="component" value="Chromosome"/>
</dbReference>
<dbReference type="GO" id="GO:0051539">
    <property type="term" value="F:4 iron, 4 sulfur cluster binding"/>
    <property type="evidence" value="ECO:0007669"/>
    <property type="project" value="UniProtKB-UniRule"/>
</dbReference>
<dbReference type="GO" id="GO:0005506">
    <property type="term" value="F:iron ion binding"/>
    <property type="evidence" value="ECO:0007669"/>
    <property type="project" value="InterPro"/>
</dbReference>
<dbReference type="GO" id="GO:0016226">
    <property type="term" value="P:iron-sulfur cluster assembly"/>
    <property type="evidence" value="ECO:0007669"/>
    <property type="project" value="UniProtKB-UniRule"/>
</dbReference>
<dbReference type="GO" id="GO:0051604">
    <property type="term" value="P:protein maturation"/>
    <property type="evidence" value="ECO:0007669"/>
    <property type="project" value="UniProtKB-UniRule"/>
</dbReference>
<dbReference type="Gene3D" id="3.30.300.130">
    <property type="entry name" value="Fe-S cluster assembly (FSCA)"/>
    <property type="match status" value="1"/>
</dbReference>
<dbReference type="Gene3D" id="2.60.300.12">
    <property type="entry name" value="HesB-like domain"/>
    <property type="match status" value="1"/>
</dbReference>
<dbReference type="HAMAP" id="MF_01637">
    <property type="entry name" value="Fe_S_biogen_NfuA"/>
    <property type="match status" value="1"/>
</dbReference>
<dbReference type="InterPro" id="IPR017726">
    <property type="entry name" value="Fe/S_biogenesis_protein_NfuA"/>
</dbReference>
<dbReference type="InterPro" id="IPR034904">
    <property type="entry name" value="FSCA_dom_sf"/>
</dbReference>
<dbReference type="InterPro" id="IPR035903">
    <property type="entry name" value="HesB-like_dom_sf"/>
</dbReference>
<dbReference type="InterPro" id="IPR001075">
    <property type="entry name" value="NIF_FeS_clus_asmbl_NifU_C"/>
</dbReference>
<dbReference type="PANTHER" id="PTHR11178:SF51">
    <property type="entry name" value="FE_S BIOGENESIS PROTEIN NFUA"/>
    <property type="match status" value="1"/>
</dbReference>
<dbReference type="PANTHER" id="PTHR11178">
    <property type="entry name" value="IRON-SULFUR CLUSTER SCAFFOLD PROTEIN NFU-RELATED"/>
    <property type="match status" value="1"/>
</dbReference>
<dbReference type="Pfam" id="PF01106">
    <property type="entry name" value="NifU"/>
    <property type="match status" value="1"/>
</dbReference>
<dbReference type="SUPFAM" id="SSF117916">
    <property type="entry name" value="Fe-S cluster assembly (FSCA) domain-like"/>
    <property type="match status" value="1"/>
</dbReference>
<dbReference type="SUPFAM" id="SSF89360">
    <property type="entry name" value="HesB-like domain"/>
    <property type="match status" value="1"/>
</dbReference>
<proteinExistence type="inferred from homology"/>
<comment type="function">
    <text evidence="1">Involved in iron-sulfur cluster biogenesis. Binds a 4Fe-4S cluster, can transfer this cluster to apoproteins, and thereby intervenes in the maturation of Fe/S proteins. Could also act as a scaffold/chaperone for damaged Fe/S proteins.</text>
</comment>
<comment type="cofactor">
    <cofactor evidence="1">
        <name>[4Fe-4S] cluster</name>
        <dbReference type="ChEBI" id="CHEBI:49883"/>
    </cofactor>
    <text evidence="1">Binds 1 [4Fe-4S] cluster per subunit. The cluster is presumably bound at the interface of two monomers.</text>
</comment>
<comment type="subunit">
    <text evidence="1">Homodimer.</text>
</comment>
<comment type="similarity">
    <text evidence="1">Belongs to the NfuA family.</text>
</comment>
<keyword id="KW-0004">4Fe-4S</keyword>
<keyword id="KW-0408">Iron</keyword>
<keyword id="KW-0411">Iron-sulfur</keyword>
<keyword id="KW-0479">Metal-binding</keyword>
<feature type="chain" id="PRO_1000186783" description="Fe/S biogenesis protein NfuA">
    <location>
        <begin position="1"/>
        <end position="199"/>
    </location>
</feature>
<feature type="binding site" evidence="1">
    <location>
        <position position="151"/>
    </location>
    <ligand>
        <name>[4Fe-4S] cluster</name>
        <dbReference type="ChEBI" id="CHEBI:49883"/>
    </ligand>
</feature>
<feature type="binding site" evidence="1">
    <location>
        <position position="154"/>
    </location>
    <ligand>
        <name>[4Fe-4S] cluster</name>
        <dbReference type="ChEBI" id="CHEBI:49883"/>
    </ligand>
</feature>
<organism>
    <name type="scientific">Stenotrophomonas maltophilia (strain R551-3)</name>
    <dbReference type="NCBI Taxonomy" id="391008"/>
    <lineage>
        <taxon>Bacteria</taxon>
        <taxon>Pseudomonadati</taxon>
        <taxon>Pseudomonadota</taxon>
        <taxon>Gammaproteobacteria</taxon>
        <taxon>Lysobacterales</taxon>
        <taxon>Lysobacteraceae</taxon>
        <taxon>Stenotrophomonas</taxon>
        <taxon>Stenotrophomonas maltophilia group</taxon>
    </lineage>
</organism>
<name>NFUA_STRM5</name>
<gene>
    <name evidence="1" type="primary">nfuA</name>
    <name type="ordered locus">Smal_2673</name>
</gene>
<accession>B4SPV3</accession>
<sequence>MIQISDTAQTHFRKLIEREGAPGMGVRLSAVDPGTPRADARLEFAEPSDLLGDEWAVDCDGFTLYVDAASVGWLDGAEIDIVAGTAGAQQLTIKAPRIKGEAPGDAASLVERVHWVVENEINPQLASHGGKVAVQEVSAEGVVLLRFGGGCQGCGMADVTLKQGIEKTLMGRVPGVTAVRDATDHDSGHAPYIPRGNAA</sequence>
<evidence type="ECO:0000255" key="1">
    <source>
        <dbReference type="HAMAP-Rule" id="MF_01637"/>
    </source>
</evidence>
<reference key="1">
    <citation type="submission" date="2008-06" db="EMBL/GenBank/DDBJ databases">
        <title>Complete sequence of Stenotrophomonas maltophilia R551-3.</title>
        <authorList>
            <consortium name="US DOE Joint Genome Institute"/>
            <person name="Lucas S."/>
            <person name="Copeland A."/>
            <person name="Lapidus A."/>
            <person name="Glavina del Rio T."/>
            <person name="Dalin E."/>
            <person name="Tice H."/>
            <person name="Pitluck S."/>
            <person name="Chain P."/>
            <person name="Malfatti S."/>
            <person name="Shin M."/>
            <person name="Vergez L."/>
            <person name="Lang D."/>
            <person name="Schmutz J."/>
            <person name="Larimer F."/>
            <person name="Land M."/>
            <person name="Hauser L."/>
            <person name="Kyrpides N."/>
            <person name="Mikhailova N."/>
            <person name="Taghavi S."/>
            <person name="Monchy S."/>
            <person name="Newman L."/>
            <person name="Vangronsveld J."/>
            <person name="van der Lelie D."/>
            <person name="Richardson P."/>
        </authorList>
    </citation>
    <scope>NUCLEOTIDE SEQUENCE [LARGE SCALE GENOMIC DNA]</scope>
    <source>
        <strain>R551-3</strain>
    </source>
</reference>